<sequence>MSDSLRIIFAGTPDFAARHLDALLTSGHNVVGVFTQPDRPAGRGKKLMPSPVKVLAEEKGLPVFQPVSLRPQENQHLVADLHADVMVVVAYGLILPKAVLDMPRLGCINVHGSLLPRWRGAAPIQRSLWAGDAETGVTIMQMDVGLDTGDMLYKLACPITAEDTSGSLYNKLAELGPQGLITTLKQLADGTATPEAQNEALVTHAEKLSKEEARIDWSLSAAQLERCIRAFNPWPMSWLEIDGQPVKVWQASVIEDATQSLPGTILAATKQGIQVATGKGILNLLSLQPAGKKAMSAQDLLNSRREWFIPGNRLA</sequence>
<keyword id="KW-0648">Protein biosynthesis</keyword>
<keyword id="KW-0808">Transferase</keyword>
<accession>B4SUQ9</accession>
<name>FMT_SALNS</name>
<gene>
    <name evidence="1" type="primary">fmt</name>
    <name type="ordered locus">SNSL254_A3676</name>
</gene>
<protein>
    <recommendedName>
        <fullName evidence="1">Methionyl-tRNA formyltransferase</fullName>
        <ecNumber evidence="1">2.1.2.9</ecNumber>
    </recommendedName>
</protein>
<evidence type="ECO:0000255" key="1">
    <source>
        <dbReference type="HAMAP-Rule" id="MF_00182"/>
    </source>
</evidence>
<dbReference type="EC" id="2.1.2.9" evidence="1"/>
<dbReference type="EMBL" id="CP001113">
    <property type="protein sequence ID" value="ACF61830.1"/>
    <property type="molecule type" value="Genomic_DNA"/>
</dbReference>
<dbReference type="RefSeq" id="WP_001285165.1">
    <property type="nucleotide sequence ID" value="NZ_CCMR01000003.1"/>
</dbReference>
<dbReference type="SMR" id="B4SUQ9"/>
<dbReference type="KEGG" id="see:SNSL254_A3676"/>
<dbReference type="HOGENOM" id="CLU_033347_1_2_6"/>
<dbReference type="Proteomes" id="UP000008824">
    <property type="component" value="Chromosome"/>
</dbReference>
<dbReference type="GO" id="GO:0005829">
    <property type="term" value="C:cytosol"/>
    <property type="evidence" value="ECO:0007669"/>
    <property type="project" value="TreeGrafter"/>
</dbReference>
<dbReference type="GO" id="GO:0004479">
    <property type="term" value="F:methionyl-tRNA formyltransferase activity"/>
    <property type="evidence" value="ECO:0007669"/>
    <property type="project" value="UniProtKB-UniRule"/>
</dbReference>
<dbReference type="CDD" id="cd08646">
    <property type="entry name" value="FMT_core_Met-tRNA-FMT_N"/>
    <property type="match status" value="1"/>
</dbReference>
<dbReference type="CDD" id="cd08704">
    <property type="entry name" value="Met_tRNA_FMT_C"/>
    <property type="match status" value="1"/>
</dbReference>
<dbReference type="FunFam" id="3.10.25.10:FF:000001">
    <property type="entry name" value="Methionyl-tRNA formyltransferase"/>
    <property type="match status" value="1"/>
</dbReference>
<dbReference type="FunFam" id="3.40.50.170:FF:000003">
    <property type="entry name" value="Methionyl-tRNA formyltransferase"/>
    <property type="match status" value="1"/>
</dbReference>
<dbReference type="Gene3D" id="3.10.25.10">
    <property type="entry name" value="Formyl transferase, C-terminal domain"/>
    <property type="match status" value="1"/>
</dbReference>
<dbReference type="Gene3D" id="3.40.50.170">
    <property type="entry name" value="Formyl transferase, N-terminal domain"/>
    <property type="match status" value="1"/>
</dbReference>
<dbReference type="HAMAP" id="MF_00182">
    <property type="entry name" value="Formyl_trans"/>
    <property type="match status" value="1"/>
</dbReference>
<dbReference type="InterPro" id="IPR005794">
    <property type="entry name" value="Fmt"/>
</dbReference>
<dbReference type="InterPro" id="IPR005793">
    <property type="entry name" value="Formyl_trans_C"/>
</dbReference>
<dbReference type="InterPro" id="IPR037022">
    <property type="entry name" value="Formyl_trans_C_sf"/>
</dbReference>
<dbReference type="InterPro" id="IPR002376">
    <property type="entry name" value="Formyl_transf_N"/>
</dbReference>
<dbReference type="InterPro" id="IPR036477">
    <property type="entry name" value="Formyl_transf_N_sf"/>
</dbReference>
<dbReference type="InterPro" id="IPR011034">
    <property type="entry name" value="Formyl_transferase-like_C_sf"/>
</dbReference>
<dbReference type="InterPro" id="IPR001555">
    <property type="entry name" value="GART_AS"/>
</dbReference>
<dbReference type="InterPro" id="IPR044135">
    <property type="entry name" value="Met-tRNA-FMT_C"/>
</dbReference>
<dbReference type="InterPro" id="IPR041711">
    <property type="entry name" value="Met-tRNA-FMT_N"/>
</dbReference>
<dbReference type="NCBIfam" id="TIGR00460">
    <property type="entry name" value="fmt"/>
    <property type="match status" value="1"/>
</dbReference>
<dbReference type="PANTHER" id="PTHR11138">
    <property type="entry name" value="METHIONYL-TRNA FORMYLTRANSFERASE"/>
    <property type="match status" value="1"/>
</dbReference>
<dbReference type="PANTHER" id="PTHR11138:SF5">
    <property type="entry name" value="METHIONYL-TRNA FORMYLTRANSFERASE, MITOCHONDRIAL"/>
    <property type="match status" value="1"/>
</dbReference>
<dbReference type="Pfam" id="PF02911">
    <property type="entry name" value="Formyl_trans_C"/>
    <property type="match status" value="1"/>
</dbReference>
<dbReference type="Pfam" id="PF00551">
    <property type="entry name" value="Formyl_trans_N"/>
    <property type="match status" value="1"/>
</dbReference>
<dbReference type="SUPFAM" id="SSF50486">
    <property type="entry name" value="FMT C-terminal domain-like"/>
    <property type="match status" value="1"/>
</dbReference>
<dbReference type="SUPFAM" id="SSF53328">
    <property type="entry name" value="Formyltransferase"/>
    <property type="match status" value="1"/>
</dbReference>
<dbReference type="PROSITE" id="PS00373">
    <property type="entry name" value="GART"/>
    <property type="match status" value="1"/>
</dbReference>
<proteinExistence type="inferred from homology"/>
<comment type="function">
    <text evidence="1">Attaches a formyl group to the free amino group of methionyl-tRNA(fMet). The formyl group appears to play a dual role in the initiator identity of N-formylmethionyl-tRNA by promoting its recognition by IF2 and preventing the misappropriation of this tRNA by the elongation apparatus.</text>
</comment>
<comment type="catalytic activity">
    <reaction evidence="1">
        <text>L-methionyl-tRNA(fMet) + (6R)-10-formyltetrahydrofolate = N-formyl-L-methionyl-tRNA(fMet) + (6S)-5,6,7,8-tetrahydrofolate + H(+)</text>
        <dbReference type="Rhea" id="RHEA:24380"/>
        <dbReference type="Rhea" id="RHEA-COMP:9952"/>
        <dbReference type="Rhea" id="RHEA-COMP:9953"/>
        <dbReference type="ChEBI" id="CHEBI:15378"/>
        <dbReference type="ChEBI" id="CHEBI:57453"/>
        <dbReference type="ChEBI" id="CHEBI:78530"/>
        <dbReference type="ChEBI" id="CHEBI:78844"/>
        <dbReference type="ChEBI" id="CHEBI:195366"/>
        <dbReference type="EC" id="2.1.2.9"/>
    </reaction>
</comment>
<comment type="similarity">
    <text evidence="1">Belongs to the Fmt family.</text>
</comment>
<organism>
    <name type="scientific">Salmonella newport (strain SL254)</name>
    <dbReference type="NCBI Taxonomy" id="423368"/>
    <lineage>
        <taxon>Bacteria</taxon>
        <taxon>Pseudomonadati</taxon>
        <taxon>Pseudomonadota</taxon>
        <taxon>Gammaproteobacteria</taxon>
        <taxon>Enterobacterales</taxon>
        <taxon>Enterobacteriaceae</taxon>
        <taxon>Salmonella</taxon>
    </lineage>
</organism>
<reference key="1">
    <citation type="journal article" date="2011" name="J. Bacteriol.">
        <title>Comparative genomics of 28 Salmonella enterica isolates: evidence for CRISPR-mediated adaptive sublineage evolution.</title>
        <authorList>
            <person name="Fricke W.F."/>
            <person name="Mammel M.K."/>
            <person name="McDermott P.F."/>
            <person name="Tartera C."/>
            <person name="White D.G."/>
            <person name="Leclerc J.E."/>
            <person name="Ravel J."/>
            <person name="Cebula T.A."/>
        </authorList>
    </citation>
    <scope>NUCLEOTIDE SEQUENCE [LARGE SCALE GENOMIC DNA]</scope>
    <source>
        <strain>SL254</strain>
    </source>
</reference>
<feature type="chain" id="PRO_1000098440" description="Methionyl-tRNA formyltransferase">
    <location>
        <begin position="1"/>
        <end position="315"/>
    </location>
</feature>
<feature type="binding site" evidence="1">
    <location>
        <begin position="113"/>
        <end position="116"/>
    </location>
    <ligand>
        <name>(6S)-5,6,7,8-tetrahydrofolate</name>
        <dbReference type="ChEBI" id="CHEBI:57453"/>
    </ligand>
</feature>